<organism>
    <name type="scientific">Pseudonaja textilis</name>
    <name type="common">Eastern brown snake</name>
    <dbReference type="NCBI Taxonomy" id="8673"/>
    <lineage>
        <taxon>Eukaryota</taxon>
        <taxon>Metazoa</taxon>
        <taxon>Chordata</taxon>
        <taxon>Craniata</taxon>
        <taxon>Vertebrata</taxon>
        <taxon>Euteleostomi</taxon>
        <taxon>Lepidosauria</taxon>
        <taxon>Squamata</taxon>
        <taxon>Bifurcata</taxon>
        <taxon>Unidentata</taxon>
        <taxon>Episquamata</taxon>
        <taxon>Toxicofera</taxon>
        <taxon>Serpentes</taxon>
        <taxon>Colubroidea</taxon>
        <taxon>Elapidae</taxon>
        <taxon>Hydrophiinae</taxon>
        <taxon>Pseudonaja</taxon>
    </lineage>
</organism>
<keyword id="KW-1015">Disulfide bond</keyword>
<keyword id="KW-0646">Protease inhibitor</keyword>
<keyword id="KW-1185">Reference proteome</keyword>
<keyword id="KW-0964">Secreted</keyword>
<keyword id="KW-0732">Signal</keyword>
<keyword id="KW-0789">Thiol protease inhibitor</keyword>
<proteinExistence type="evidence at protein level"/>
<name>CYT_PSETE</name>
<feature type="signal peptide" evidence="1">
    <location>
        <begin position="1"/>
        <end position="26"/>
    </location>
</feature>
<feature type="chain" id="PRO_5000654411" description="Cystatin">
    <location>
        <begin position="27"/>
        <end position="141"/>
    </location>
</feature>
<feature type="domain" description="Cystatin">
    <location>
        <begin position="29"/>
        <end position="129"/>
    </location>
</feature>
<feature type="short sequence motif" description="Secondary area of contact" evidence="1">
    <location>
        <begin position="73"/>
        <end position="77"/>
    </location>
</feature>
<feature type="site" description="Reactive site" evidence="1">
    <location>
        <position position="29"/>
    </location>
</feature>
<feature type="disulfide bond" evidence="1">
    <location>
        <begin position="91"/>
        <end position="107"/>
    </location>
</feature>
<feature type="disulfide bond" evidence="1">
    <location>
        <begin position="120"/>
        <end position="140"/>
    </location>
</feature>
<evidence type="ECO:0000250" key="1"/>
<evidence type="ECO:0000305" key="2"/>
<evidence type="ECO:0000305" key="3">
    <source>
    </source>
</evidence>
<sequence length="141" mass="15867">MVHSQLPVAAPLRLLCALLLLPSATMIPGGLSPRSVTDPDVQKAAEFAVQEYNSLSTNAYYYKQLRIVEAQSQVVAGAKYYLTMELMKTKCAKATGKPKVYKEIQNCELPPKAQQEKLTCHFQVWSRPWLEKMELTKMSCN</sequence>
<accession>E3P6N4</accession>
<reference key="1">
    <citation type="journal article" date="2011" name="Biochimie">
        <title>Cloning and characterisation of novel cystatins from elapid snake venom glands.</title>
        <authorList>
            <person name="Richards R."/>
            <person name="St Pierre L."/>
            <person name="Trabi M."/>
            <person name="Johnson L.A."/>
            <person name="de Jersey J."/>
            <person name="Masci P.P."/>
            <person name="Lavin M.F."/>
        </authorList>
    </citation>
    <scope>NUCLEOTIDE SEQUENCE [MRNA]</scope>
    <scope>LEVEL OF PROTEIN EXPRESSION</scope>
    <source>
        <tissue>Venom</tissue>
        <tissue>Venom gland</tissue>
    </source>
</reference>
<comment type="function">
    <text evidence="1">Inhibits various C1 cysteine proteases including cathepsin L, papain and cathepsin B. This protein has no toxic activity and its function in the venom is unknown. It may play a role as a housekeeping or regulatory protein (By similarity).</text>
</comment>
<comment type="subcellular location">
    <subcellularLocation>
        <location>Secreted</location>
    </subcellularLocation>
</comment>
<comment type="tissue specificity">
    <text evidence="3">Expressed at a low level by the venom gland (at protein level).</text>
</comment>
<comment type="miscellaneous">
    <text evidence="1">Negative results: the recombinant protein does not inhibit calpain-1 (CAPN1), a C2 family cysteine protease and legumain (LGMN), a C13 family cysteine protease. Does not provoke cell death (PC3 prostrate cancer cells) (By similarity).</text>
</comment>
<comment type="similarity">
    <text evidence="2">Belongs to the cystatin family.</text>
</comment>
<protein>
    <recommendedName>
        <fullName>Cystatin</fullName>
    </recommendedName>
</protein>
<dbReference type="EMBL" id="FJ411279">
    <property type="protein sequence ID" value="ACR83840.1"/>
    <property type="molecule type" value="mRNA"/>
</dbReference>
<dbReference type="RefSeq" id="XP_026577584.1">
    <property type="nucleotide sequence ID" value="XM_026721799.1"/>
</dbReference>
<dbReference type="SMR" id="E3P6N4"/>
<dbReference type="MEROPS" id="I25.012"/>
<dbReference type="GeneID" id="113450568"/>
<dbReference type="OrthoDB" id="1908104at2759"/>
<dbReference type="Proteomes" id="UP000472273">
    <property type="component" value="Unplaced"/>
</dbReference>
<dbReference type="GO" id="GO:0070062">
    <property type="term" value="C:extracellular exosome"/>
    <property type="evidence" value="ECO:0007669"/>
    <property type="project" value="TreeGrafter"/>
</dbReference>
<dbReference type="GO" id="GO:0004869">
    <property type="term" value="F:cysteine-type endopeptidase inhibitor activity"/>
    <property type="evidence" value="ECO:0007669"/>
    <property type="project" value="UniProtKB-KW"/>
</dbReference>
<dbReference type="CDD" id="cd00042">
    <property type="entry name" value="CY"/>
    <property type="match status" value="1"/>
</dbReference>
<dbReference type="FunFam" id="3.10.450.10:FF:000004">
    <property type="entry name" value="Cystatin C"/>
    <property type="match status" value="1"/>
</dbReference>
<dbReference type="Gene3D" id="3.10.450.10">
    <property type="match status" value="1"/>
</dbReference>
<dbReference type="InterPro" id="IPR000010">
    <property type="entry name" value="Cystatin_dom"/>
</dbReference>
<dbReference type="InterPro" id="IPR046350">
    <property type="entry name" value="Cystatin_sf"/>
</dbReference>
<dbReference type="InterPro" id="IPR018073">
    <property type="entry name" value="Prot_inh_cystat_CS"/>
</dbReference>
<dbReference type="PANTHER" id="PTHR47033">
    <property type="entry name" value="CYSTATIN-M"/>
    <property type="match status" value="1"/>
</dbReference>
<dbReference type="PANTHER" id="PTHR47033:SF1">
    <property type="entry name" value="CYSTATIN-M"/>
    <property type="match status" value="1"/>
</dbReference>
<dbReference type="Pfam" id="PF00031">
    <property type="entry name" value="Cystatin"/>
    <property type="match status" value="1"/>
</dbReference>
<dbReference type="SMART" id="SM00043">
    <property type="entry name" value="CY"/>
    <property type="match status" value="1"/>
</dbReference>
<dbReference type="SUPFAM" id="SSF54403">
    <property type="entry name" value="Cystatin/monellin"/>
    <property type="match status" value="1"/>
</dbReference>
<dbReference type="PROSITE" id="PS00287">
    <property type="entry name" value="CYSTATIN"/>
    <property type="match status" value="1"/>
</dbReference>